<accession>Q8BQP8</accession>
<accession>Q80T87</accession>
<name>RFIP4_MOUSE</name>
<comment type="function">
    <text evidence="1 6">Acts as a regulator of endocytic traffic by participating in membrane delivery. Required for the abscission step in cytokinesis, possibly by acting as an 'address tag' delivering recycling endosome membranes to the cleavage furrow during late cytokinesis (By similarity). May play a role in differentiation during retinal development, in a Rab11-independent manner.</text>
</comment>
<comment type="subunit">
    <text evidence="1">Homodimer. Forms a complex with Rab11 (RAB11A or RAB11B) and ARF6. Interacts with RAB11A; the interaction is direct. Forms a heterooligomeric complex with RAB11FIP2, RAB11FIP3 and RAB11FIP5 (By similarity). Interacts with ECPAS (By similarity).</text>
</comment>
<comment type="subcellular location">
    <subcellularLocation>
        <location evidence="1">Recycling endosome membrane</location>
        <topology evidence="1">Peripheral membrane protein</topology>
    </subcellularLocation>
    <subcellularLocation>
        <location evidence="1">Cleavage furrow</location>
    </subcellularLocation>
    <subcellularLocation>
        <location evidence="1">Midbody</location>
    </subcellularLocation>
    <subcellularLocation>
        <location evidence="1">Cytoplasmic vesicle</location>
    </subcellularLocation>
    <text evidence="1">Recruited to the cleavage furrow and the midbody during cytokinesis.</text>
</comment>
<comment type="tissue specificity">
    <text evidence="6">Strongly expressed in the developing retina. Expressed predominantly in neural tissues.</text>
</comment>
<comment type="domain">
    <text evidence="1">The RBD-FIP domain mediates the interaction with Rab11 (RAB11A or RAB11B).</text>
</comment>
<evidence type="ECO:0000250" key="1"/>
<evidence type="ECO:0000255" key="2"/>
<evidence type="ECO:0000255" key="3">
    <source>
        <dbReference type="PROSITE-ProRule" id="PRU00448"/>
    </source>
</evidence>
<evidence type="ECO:0000255" key="4">
    <source>
        <dbReference type="PROSITE-ProRule" id="PRU00844"/>
    </source>
</evidence>
<evidence type="ECO:0000256" key="5">
    <source>
        <dbReference type="SAM" id="MobiDB-lite"/>
    </source>
</evidence>
<evidence type="ECO:0000269" key="6">
    <source>
    </source>
</evidence>
<evidence type="ECO:0000305" key="7"/>
<feature type="chain" id="PRO_0000073881" description="Rab11 family-interacting protein 4">
    <location>
        <begin position="1"/>
        <end position="635"/>
    </location>
</feature>
<feature type="domain" description="EF-hand" evidence="3">
    <location>
        <begin position="49"/>
        <end position="84"/>
    </location>
</feature>
<feature type="domain" description="FIP-RBD" evidence="4">
    <location>
        <begin position="572"/>
        <end position="634"/>
    </location>
</feature>
<feature type="region of interest" description="Necessary for interaction with RAB11A, subcellular location, homo- or heterooligomerization" evidence="1">
    <location>
        <begin position="82"/>
        <end position="635"/>
    </location>
</feature>
<feature type="region of interest" description="Disordered" evidence="5">
    <location>
        <begin position="147"/>
        <end position="176"/>
    </location>
</feature>
<feature type="region of interest" description="Disordered" evidence="5">
    <location>
        <begin position="216"/>
        <end position="258"/>
    </location>
</feature>
<feature type="coiled-coil region" evidence="2">
    <location>
        <begin position="279"/>
        <end position="615"/>
    </location>
</feature>
<feature type="compositionally biased region" description="Acidic residues" evidence="5">
    <location>
        <begin position="216"/>
        <end position="225"/>
    </location>
</feature>
<feature type="binding site" evidence="7">
    <location>
        <position position="62"/>
    </location>
    <ligand>
        <name>Ca(2+)</name>
        <dbReference type="ChEBI" id="CHEBI:29108"/>
    </ligand>
</feature>
<feature type="binding site" evidence="7">
    <location>
        <position position="64"/>
    </location>
    <ligand>
        <name>Ca(2+)</name>
        <dbReference type="ChEBI" id="CHEBI:29108"/>
    </ligand>
</feature>
<feature type="binding site" evidence="7">
    <location>
        <position position="68"/>
    </location>
    <ligand>
        <name>Ca(2+)</name>
        <dbReference type="ChEBI" id="CHEBI:29108"/>
    </ligand>
</feature>
<feature type="binding site" evidence="7">
    <location>
        <position position="73"/>
    </location>
    <ligand>
        <name>Ca(2+)</name>
        <dbReference type="ChEBI" id="CHEBI:29108"/>
    </ligand>
</feature>
<feature type="sequence conflict" description="In Ref. 3; BAC65841." evidence="7" ref="3">
    <original>KQENMQLVHR</original>
    <variation>WGTVAPGSAE</variation>
    <location>
        <begin position="368"/>
        <end position="377"/>
    </location>
</feature>
<protein>
    <recommendedName>
        <fullName>Rab11 family-interacting protein 4</fullName>
        <shortName>FIP4-Rab11</shortName>
        <shortName>Rab11-FIP4</shortName>
        <shortName>mRab11-FIP4A</shortName>
    </recommendedName>
</protein>
<dbReference type="EMBL" id="AK046734">
    <property type="protein sequence ID" value="BAC32850.1"/>
    <property type="molecule type" value="mRNA"/>
</dbReference>
<dbReference type="EMBL" id="AL591174">
    <property type="status" value="NOT_ANNOTATED_CDS"/>
    <property type="molecule type" value="Genomic_DNA"/>
</dbReference>
<dbReference type="EMBL" id="AK122559">
    <property type="protein sequence ID" value="BAC65841.1"/>
    <property type="molecule type" value="mRNA"/>
</dbReference>
<dbReference type="CCDS" id="CCDS25123.1"/>
<dbReference type="RefSeq" id="NP_780752.1">
    <property type="nucleotide sequence ID" value="NM_175543.3"/>
</dbReference>
<dbReference type="SMR" id="Q8BQP8"/>
<dbReference type="BioGRID" id="234501">
    <property type="interactions" value="1"/>
</dbReference>
<dbReference type="FunCoup" id="Q8BQP8">
    <property type="interactions" value="384"/>
</dbReference>
<dbReference type="STRING" id="10090.ENSMUSP00000017783"/>
<dbReference type="ChEMBL" id="CHEMBL2176809"/>
<dbReference type="iPTMnet" id="Q8BQP8"/>
<dbReference type="PhosphoSitePlus" id="Q8BQP8"/>
<dbReference type="PaxDb" id="10090-ENSMUSP00000017783"/>
<dbReference type="Antibodypedia" id="54771">
    <property type="antibodies" value="102 antibodies from 20 providers"/>
</dbReference>
<dbReference type="DNASU" id="268451"/>
<dbReference type="Ensembl" id="ENSMUST00000017783.13">
    <property type="protein sequence ID" value="ENSMUSP00000017783.7"/>
    <property type="gene ID" value="ENSMUSG00000017639.14"/>
</dbReference>
<dbReference type="GeneID" id="268451"/>
<dbReference type="KEGG" id="mmu:268451"/>
<dbReference type="UCSC" id="uc007kku.1">
    <property type="organism name" value="mouse"/>
</dbReference>
<dbReference type="AGR" id="MGI:2442920"/>
<dbReference type="CTD" id="84440"/>
<dbReference type="MGI" id="MGI:2442920">
    <property type="gene designation" value="Rab11fip4"/>
</dbReference>
<dbReference type="VEuPathDB" id="HostDB:ENSMUSG00000017639"/>
<dbReference type="eggNOG" id="KOG0982">
    <property type="taxonomic scope" value="Eukaryota"/>
</dbReference>
<dbReference type="GeneTree" id="ENSGT00440000033742"/>
<dbReference type="HOGENOM" id="CLU_018925_1_1_1"/>
<dbReference type="InParanoid" id="Q8BQP8"/>
<dbReference type="OMA" id="YCKLERE"/>
<dbReference type="OrthoDB" id="418358at2759"/>
<dbReference type="PhylomeDB" id="Q8BQP8"/>
<dbReference type="TreeFam" id="TF327221"/>
<dbReference type="BioGRID-ORCS" id="268451">
    <property type="hits" value="1 hit in 77 CRISPR screens"/>
</dbReference>
<dbReference type="ChiTaRS" id="Rab11fip4">
    <property type="organism name" value="mouse"/>
</dbReference>
<dbReference type="PRO" id="PR:Q8BQP8"/>
<dbReference type="Proteomes" id="UP000000589">
    <property type="component" value="Chromosome 11"/>
</dbReference>
<dbReference type="RNAct" id="Q8BQP8">
    <property type="molecule type" value="protein"/>
</dbReference>
<dbReference type="Bgee" id="ENSMUSG00000017639">
    <property type="expression patterns" value="Expressed in post-embryonic organism and 250 other cell types or tissues"/>
</dbReference>
<dbReference type="ExpressionAtlas" id="Q8BQP8">
    <property type="expression patterns" value="baseline and differential"/>
</dbReference>
<dbReference type="GO" id="GO:0032154">
    <property type="term" value="C:cleavage furrow"/>
    <property type="evidence" value="ECO:0000250"/>
    <property type="project" value="UniProtKB"/>
</dbReference>
<dbReference type="GO" id="GO:0030139">
    <property type="term" value="C:endocytic vesicle"/>
    <property type="evidence" value="ECO:0000250"/>
    <property type="project" value="UniProtKB"/>
</dbReference>
<dbReference type="GO" id="GO:0005768">
    <property type="term" value="C:endosome"/>
    <property type="evidence" value="ECO:0000250"/>
    <property type="project" value="UniProtKB"/>
</dbReference>
<dbReference type="GO" id="GO:0005794">
    <property type="term" value="C:Golgi apparatus"/>
    <property type="evidence" value="ECO:0007669"/>
    <property type="project" value="Ensembl"/>
</dbReference>
<dbReference type="GO" id="GO:0030496">
    <property type="term" value="C:midbody"/>
    <property type="evidence" value="ECO:0000250"/>
    <property type="project" value="UniProtKB"/>
</dbReference>
<dbReference type="GO" id="GO:0048471">
    <property type="term" value="C:perinuclear region of cytoplasm"/>
    <property type="evidence" value="ECO:0000315"/>
    <property type="project" value="MGI"/>
</dbReference>
<dbReference type="GO" id="GO:0055038">
    <property type="term" value="C:recycling endosome membrane"/>
    <property type="evidence" value="ECO:0000250"/>
    <property type="project" value="UniProtKB"/>
</dbReference>
<dbReference type="GO" id="GO:0005509">
    <property type="term" value="F:calcium ion binding"/>
    <property type="evidence" value="ECO:0007669"/>
    <property type="project" value="InterPro"/>
</dbReference>
<dbReference type="GO" id="GO:0042803">
    <property type="term" value="F:protein homodimerization activity"/>
    <property type="evidence" value="ECO:0000250"/>
    <property type="project" value="UniProtKB"/>
</dbReference>
<dbReference type="GO" id="GO:0031267">
    <property type="term" value="F:small GTPase binding"/>
    <property type="evidence" value="ECO:0000250"/>
    <property type="project" value="UniProtKB"/>
</dbReference>
<dbReference type="GO" id="GO:0051301">
    <property type="term" value="P:cell division"/>
    <property type="evidence" value="ECO:0007669"/>
    <property type="project" value="UniProtKB-KW"/>
</dbReference>
<dbReference type="GO" id="GO:0003407">
    <property type="term" value="P:neural retina development"/>
    <property type="evidence" value="ECO:0000315"/>
    <property type="project" value="MGI"/>
</dbReference>
<dbReference type="GO" id="GO:1903452">
    <property type="term" value="P:positive regulation of G1 to G0 transition"/>
    <property type="evidence" value="ECO:0000315"/>
    <property type="project" value="MGI"/>
</dbReference>
<dbReference type="GO" id="GO:0032465">
    <property type="term" value="P:regulation of cytokinesis"/>
    <property type="evidence" value="ECO:0000250"/>
    <property type="project" value="UniProtKB"/>
</dbReference>
<dbReference type="FunFam" id="1.10.238.10:FF:000284">
    <property type="entry name" value="RAB11 family interacting protein 4"/>
    <property type="match status" value="1"/>
</dbReference>
<dbReference type="FunFam" id="1.20.5.2440:FF:000001">
    <property type="entry name" value="RAB11 family interacting protein 4"/>
    <property type="match status" value="1"/>
</dbReference>
<dbReference type="Gene3D" id="1.20.5.2440">
    <property type="match status" value="1"/>
</dbReference>
<dbReference type="Gene3D" id="1.10.238.10">
    <property type="entry name" value="EF-hand"/>
    <property type="match status" value="1"/>
</dbReference>
<dbReference type="InterPro" id="IPR011992">
    <property type="entry name" value="EF-hand-dom_pair"/>
</dbReference>
<dbReference type="InterPro" id="IPR002048">
    <property type="entry name" value="EF_hand_dom"/>
</dbReference>
<dbReference type="InterPro" id="IPR037245">
    <property type="entry name" value="FIP-RBD_C_sf"/>
</dbReference>
<dbReference type="InterPro" id="IPR019018">
    <property type="entry name" value="Rab-bd_FIP-RBD"/>
</dbReference>
<dbReference type="InterPro" id="IPR051977">
    <property type="entry name" value="Rab11-interacting_regulator"/>
</dbReference>
<dbReference type="PANTHER" id="PTHR15726:SF5">
    <property type="entry name" value="RAB11 FAMILY-INTERACTING PROTEIN 4"/>
    <property type="match status" value="1"/>
</dbReference>
<dbReference type="PANTHER" id="PTHR15726">
    <property type="entry name" value="RAB11-FAMILY INTERACTING PROTEIN"/>
    <property type="match status" value="1"/>
</dbReference>
<dbReference type="Pfam" id="PF25450">
    <property type="entry name" value="Rab11-FIP3"/>
    <property type="match status" value="1"/>
</dbReference>
<dbReference type="Pfam" id="PF09457">
    <property type="entry name" value="RBD-FIP"/>
    <property type="match status" value="1"/>
</dbReference>
<dbReference type="SUPFAM" id="SSF47473">
    <property type="entry name" value="EF-hand"/>
    <property type="match status" value="1"/>
</dbReference>
<dbReference type="SUPFAM" id="SSF144270">
    <property type="entry name" value="Eferin C-derminal domain-like"/>
    <property type="match status" value="1"/>
</dbReference>
<dbReference type="PROSITE" id="PS50222">
    <property type="entry name" value="EF_HAND_2"/>
    <property type="match status" value="1"/>
</dbReference>
<dbReference type="PROSITE" id="PS51511">
    <property type="entry name" value="FIP_RBD"/>
    <property type="match status" value="1"/>
</dbReference>
<reference key="1">
    <citation type="journal article" date="2005" name="Science">
        <title>The transcriptional landscape of the mammalian genome.</title>
        <authorList>
            <person name="Carninci P."/>
            <person name="Kasukawa T."/>
            <person name="Katayama S."/>
            <person name="Gough J."/>
            <person name="Frith M.C."/>
            <person name="Maeda N."/>
            <person name="Oyama R."/>
            <person name="Ravasi T."/>
            <person name="Lenhard B."/>
            <person name="Wells C."/>
            <person name="Kodzius R."/>
            <person name="Shimokawa K."/>
            <person name="Bajic V.B."/>
            <person name="Brenner S.E."/>
            <person name="Batalov S."/>
            <person name="Forrest A.R."/>
            <person name="Zavolan M."/>
            <person name="Davis M.J."/>
            <person name="Wilming L.G."/>
            <person name="Aidinis V."/>
            <person name="Allen J.E."/>
            <person name="Ambesi-Impiombato A."/>
            <person name="Apweiler R."/>
            <person name="Aturaliya R.N."/>
            <person name="Bailey T.L."/>
            <person name="Bansal M."/>
            <person name="Baxter L."/>
            <person name="Beisel K.W."/>
            <person name="Bersano T."/>
            <person name="Bono H."/>
            <person name="Chalk A.M."/>
            <person name="Chiu K.P."/>
            <person name="Choudhary V."/>
            <person name="Christoffels A."/>
            <person name="Clutterbuck D.R."/>
            <person name="Crowe M.L."/>
            <person name="Dalla E."/>
            <person name="Dalrymple B.P."/>
            <person name="de Bono B."/>
            <person name="Della Gatta G."/>
            <person name="di Bernardo D."/>
            <person name="Down T."/>
            <person name="Engstrom P."/>
            <person name="Fagiolini M."/>
            <person name="Faulkner G."/>
            <person name="Fletcher C.F."/>
            <person name="Fukushima T."/>
            <person name="Furuno M."/>
            <person name="Futaki S."/>
            <person name="Gariboldi M."/>
            <person name="Georgii-Hemming P."/>
            <person name="Gingeras T.R."/>
            <person name="Gojobori T."/>
            <person name="Green R.E."/>
            <person name="Gustincich S."/>
            <person name="Harbers M."/>
            <person name="Hayashi Y."/>
            <person name="Hensch T.K."/>
            <person name="Hirokawa N."/>
            <person name="Hill D."/>
            <person name="Huminiecki L."/>
            <person name="Iacono M."/>
            <person name="Ikeo K."/>
            <person name="Iwama A."/>
            <person name="Ishikawa T."/>
            <person name="Jakt M."/>
            <person name="Kanapin A."/>
            <person name="Katoh M."/>
            <person name="Kawasawa Y."/>
            <person name="Kelso J."/>
            <person name="Kitamura H."/>
            <person name="Kitano H."/>
            <person name="Kollias G."/>
            <person name="Krishnan S.P."/>
            <person name="Kruger A."/>
            <person name="Kummerfeld S.K."/>
            <person name="Kurochkin I.V."/>
            <person name="Lareau L.F."/>
            <person name="Lazarevic D."/>
            <person name="Lipovich L."/>
            <person name="Liu J."/>
            <person name="Liuni S."/>
            <person name="McWilliam S."/>
            <person name="Madan Babu M."/>
            <person name="Madera M."/>
            <person name="Marchionni L."/>
            <person name="Matsuda H."/>
            <person name="Matsuzawa S."/>
            <person name="Miki H."/>
            <person name="Mignone F."/>
            <person name="Miyake S."/>
            <person name="Morris K."/>
            <person name="Mottagui-Tabar S."/>
            <person name="Mulder N."/>
            <person name="Nakano N."/>
            <person name="Nakauchi H."/>
            <person name="Ng P."/>
            <person name="Nilsson R."/>
            <person name="Nishiguchi S."/>
            <person name="Nishikawa S."/>
            <person name="Nori F."/>
            <person name="Ohara O."/>
            <person name="Okazaki Y."/>
            <person name="Orlando V."/>
            <person name="Pang K.C."/>
            <person name="Pavan W.J."/>
            <person name="Pavesi G."/>
            <person name="Pesole G."/>
            <person name="Petrovsky N."/>
            <person name="Piazza S."/>
            <person name="Reed J."/>
            <person name="Reid J.F."/>
            <person name="Ring B.Z."/>
            <person name="Ringwald M."/>
            <person name="Rost B."/>
            <person name="Ruan Y."/>
            <person name="Salzberg S.L."/>
            <person name="Sandelin A."/>
            <person name="Schneider C."/>
            <person name="Schoenbach C."/>
            <person name="Sekiguchi K."/>
            <person name="Semple C.A."/>
            <person name="Seno S."/>
            <person name="Sessa L."/>
            <person name="Sheng Y."/>
            <person name="Shibata Y."/>
            <person name="Shimada H."/>
            <person name="Shimada K."/>
            <person name="Silva D."/>
            <person name="Sinclair B."/>
            <person name="Sperling S."/>
            <person name="Stupka E."/>
            <person name="Sugiura K."/>
            <person name="Sultana R."/>
            <person name="Takenaka Y."/>
            <person name="Taki K."/>
            <person name="Tammoja K."/>
            <person name="Tan S.L."/>
            <person name="Tang S."/>
            <person name="Taylor M.S."/>
            <person name="Tegner J."/>
            <person name="Teichmann S.A."/>
            <person name="Ueda H.R."/>
            <person name="van Nimwegen E."/>
            <person name="Verardo R."/>
            <person name="Wei C.L."/>
            <person name="Yagi K."/>
            <person name="Yamanishi H."/>
            <person name="Zabarovsky E."/>
            <person name="Zhu S."/>
            <person name="Zimmer A."/>
            <person name="Hide W."/>
            <person name="Bult C."/>
            <person name="Grimmond S.M."/>
            <person name="Teasdale R.D."/>
            <person name="Liu E.T."/>
            <person name="Brusic V."/>
            <person name="Quackenbush J."/>
            <person name="Wahlestedt C."/>
            <person name="Mattick J.S."/>
            <person name="Hume D.A."/>
            <person name="Kai C."/>
            <person name="Sasaki D."/>
            <person name="Tomaru Y."/>
            <person name="Fukuda S."/>
            <person name="Kanamori-Katayama M."/>
            <person name="Suzuki M."/>
            <person name="Aoki J."/>
            <person name="Arakawa T."/>
            <person name="Iida J."/>
            <person name="Imamura K."/>
            <person name="Itoh M."/>
            <person name="Kato T."/>
            <person name="Kawaji H."/>
            <person name="Kawagashira N."/>
            <person name="Kawashima T."/>
            <person name="Kojima M."/>
            <person name="Kondo S."/>
            <person name="Konno H."/>
            <person name="Nakano K."/>
            <person name="Ninomiya N."/>
            <person name="Nishio T."/>
            <person name="Okada M."/>
            <person name="Plessy C."/>
            <person name="Shibata K."/>
            <person name="Shiraki T."/>
            <person name="Suzuki S."/>
            <person name="Tagami M."/>
            <person name="Waki K."/>
            <person name="Watahiki A."/>
            <person name="Okamura-Oho Y."/>
            <person name="Suzuki H."/>
            <person name="Kawai J."/>
            <person name="Hayashizaki Y."/>
        </authorList>
    </citation>
    <scope>NUCLEOTIDE SEQUENCE [LARGE SCALE MRNA]</scope>
    <source>
        <strain>C57BL/6J</strain>
        <tissue>Brain cortex</tissue>
    </source>
</reference>
<reference key="2">
    <citation type="journal article" date="2009" name="PLoS Biol.">
        <title>Lineage-specific biology revealed by a finished genome assembly of the mouse.</title>
        <authorList>
            <person name="Church D.M."/>
            <person name="Goodstadt L."/>
            <person name="Hillier L.W."/>
            <person name="Zody M.C."/>
            <person name="Goldstein S."/>
            <person name="She X."/>
            <person name="Bult C.J."/>
            <person name="Agarwala R."/>
            <person name="Cherry J.L."/>
            <person name="DiCuccio M."/>
            <person name="Hlavina W."/>
            <person name="Kapustin Y."/>
            <person name="Meric P."/>
            <person name="Maglott D."/>
            <person name="Birtle Z."/>
            <person name="Marques A.C."/>
            <person name="Graves T."/>
            <person name="Zhou S."/>
            <person name="Teague B."/>
            <person name="Potamousis K."/>
            <person name="Churas C."/>
            <person name="Place M."/>
            <person name="Herschleb J."/>
            <person name="Runnheim R."/>
            <person name="Forrest D."/>
            <person name="Amos-Landgraf J."/>
            <person name="Schwartz D.C."/>
            <person name="Cheng Z."/>
            <person name="Lindblad-Toh K."/>
            <person name="Eichler E.E."/>
            <person name="Ponting C.P."/>
        </authorList>
    </citation>
    <scope>NUCLEOTIDE SEQUENCE [LARGE SCALE GENOMIC DNA]</scope>
    <source>
        <strain>C57BL/6J</strain>
    </source>
</reference>
<reference key="3">
    <citation type="journal article" date="2003" name="DNA Res.">
        <title>Prediction of the coding sequences of mouse homologues of KIAA gene: II. The complete nucleotide sequences of 400 mouse KIAA-homologous cDNAs identified by screening of terminal sequences of cDNA clones randomly sampled from size-fractionated libraries.</title>
        <authorList>
            <person name="Okazaki N."/>
            <person name="Kikuno R."/>
            <person name="Ohara R."/>
            <person name="Inamoto S."/>
            <person name="Aizawa H."/>
            <person name="Yuasa S."/>
            <person name="Nakajima D."/>
            <person name="Nagase T."/>
            <person name="Ohara O."/>
            <person name="Koga H."/>
        </authorList>
    </citation>
    <scope>NUCLEOTIDE SEQUENCE [LARGE SCALE MRNA] OF 368-635</scope>
    <source>
        <tissue>Brain</tissue>
    </source>
</reference>
<reference key="4">
    <citation type="journal article" date="2003" name="Mol. Biol. Cell">
        <title>Arfophilins are dual Arf/Rab 11 binding proteins that regulate recycling endosome distribution and are related to Drosophila nuclear fallout.</title>
        <authorList>
            <person name="Hickson G.R."/>
            <person name="Matheson J."/>
            <person name="Riggs B."/>
            <person name="Maier V.H."/>
            <person name="Fielding A.B."/>
            <person name="Prekeris R."/>
            <person name="Sullivan W."/>
            <person name="Barr F.A."/>
            <person name="Gould G.W."/>
        </authorList>
    </citation>
    <scope>INTERACTION WITH RAB11A</scope>
</reference>
<reference key="5">
    <citation type="journal article" date="2007" name="Dev. Dyn.">
        <title>Mouse Rab11-FIP4 regulates proliferation and differentiation of retinal progenitors in a Rab11-independent manner.</title>
        <authorList>
            <person name="Muto A."/>
            <person name="Aoki Y."/>
            <person name="Watanabe S."/>
        </authorList>
    </citation>
    <scope>FUNCTION</scope>
    <scope>TISSUE SPECIFICITY</scope>
</reference>
<reference key="6">
    <citation type="journal article" date="2010" name="Cell">
        <title>A tissue-specific atlas of mouse protein phosphorylation and expression.</title>
        <authorList>
            <person name="Huttlin E.L."/>
            <person name="Jedrychowski M.P."/>
            <person name="Elias J.E."/>
            <person name="Goswami T."/>
            <person name="Rad R."/>
            <person name="Beausoleil S.A."/>
            <person name="Villen J."/>
            <person name="Haas W."/>
            <person name="Sowa M.E."/>
            <person name="Gygi S.P."/>
        </authorList>
    </citation>
    <scope>IDENTIFICATION BY MASS SPECTROMETRY [LARGE SCALE ANALYSIS]</scope>
    <source>
        <tissue>Kidney</tissue>
    </source>
</reference>
<keyword id="KW-0106">Calcium</keyword>
<keyword id="KW-0131">Cell cycle</keyword>
<keyword id="KW-0132">Cell division</keyword>
<keyword id="KW-0175">Coiled coil</keyword>
<keyword id="KW-0968">Cytoplasmic vesicle</keyword>
<keyword id="KW-0967">Endosome</keyword>
<keyword id="KW-0472">Membrane</keyword>
<keyword id="KW-0479">Metal-binding</keyword>
<keyword id="KW-1185">Reference proteome</keyword>
<keyword id="KW-0813">Transport</keyword>
<organism>
    <name type="scientific">Mus musculus</name>
    <name type="common">Mouse</name>
    <dbReference type="NCBI Taxonomy" id="10090"/>
    <lineage>
        <taxon>Eukaryota</taxon>
        <taxon>Metazoa</taxon>
        <taxon>Chordata</taxon>
        <taxon>Craniata</taxon>
        <taxon>Vertebrata</taxon>
        <taxon>Euteleostomi</taxon>
        <taxon>Mammalia</taxon>
        <taxon>Eutheria</taxon>
        <taxon>Euarchontoglires</taxon>
        <taxon>Glires</taxon>
        <taxon>Rodentia</taxon>
        <taxon>Myomorpha</taxon>
        <taxon>Muroidea</taxon>
        <taxon>Muridae</taxon>
        <taxon>Murinae</taxon>
        <taxon>Mus</taxon>
        <taxon>Mus</taxon>
    </lineage>
</organism>
<proteinExistence type="evidence at protein level"/>
<gene>
    <name type="primary">Rab11fip4</name>
    <name type="synonym">Kiaa1821</name>
</gene>
<sequence>MAGGAGWAGAPAALLRSVRRLREVFEVCGRDPDGFLRVERVAALGLRFGQGEEVEKLVKCLDPNDLGRINFKDFCRGVFAMKGCEELLKDVLSVESAGTLPCSPDIPDCVEQGSDFSGSTDGEQLPREPDFFQEDEEEAMTLALPEGPQELDMDSPMESSQGPEGSVKGCGEEKEPELGGLFLPEDKCLVLTPSVTTSDLSTHSTASLISNEEQFEDYGEGDDVDCAPSSPCPDDETRTNVYSDLGSSVSSSAGQTPRKMRHAYNSELLDVYCSQCCKKINLLNDLEARLKNLKANSPNRKISSTAFGRQLMHNSNFSSSNGSTEDLFRDSIDSCDNDITEKVSFLEKKVTELENDSLTSGGLKSKLKQENMQLVHRVHELEEMVKDQETTAEQALEEEARRHREVYCKLEREKSTELELLNTRVQQLEEENTDLRTTVARLKSQTEKLDEERQRMSDRLEDTSLRLKDEMDLYKRMMDKLRQNRLEFQKEREATQELIEDLRRELEHLQMYKLDCERPGRGRSSSGLGEFNARAREVELEHEVKRLKQENHKLRDQNDDLNGQILSLSLYEAKNLFATQTKAQSLAAEIDTASRDELMEALKEQEEINFRLRQYMDKIILAILDHNPSILEIKH</sequence>